<feature type="chain" id="PRO_0000264441" description="UDP-3-O-(3-hydroxymyristoyl)glucosamine N-acyltransferase">
    <location>
        <begin position="1"/>
        <end position="340"/>
    </location>
</feature>
<feature type="active site" description="Proton acceptor" evidence="1">
    <location>
        <position position="239"/>
    </location>
</feature>
<gene>
    <name evidence="1" type="primary">lpxD</name>
    <name type="ordered locus">SG1933</name>
</gene>
<protein>
    <recommendedName>
        <fullName evidence="1">UDP-3-O-(3-hydroxymyristoyl)glucosamine N-acyltransferase</fullName>
        <shortName evidence="1">UDP-3-O-(3-OHC14)-GlcN N-acyltransferase</shortName>
        <ecNumber evidence="1">2.3.1.191</ecNumber>
    </recommendedName>
    <alternativeName>
        <fullName evidence="1">UDP-3-O-(3-hydroxytetradecanoyl)glucosamine N-acyltransferase</fullName>
    </alternativeName>
</protein>
<keyword id="KW-0012">Acyltransferase</keyword>
<keyword id="KW-0441">Lipid A biosynthesis</keyword>
<keyword id="KW-0444">Lipid biosynthesis</keyword>
<keyword id="KW-0443">Lipid metabolism</keyword>
<keyword id="KW-0677">Repeat</keyword>
<keyword id="KW-0808">Transferase</keyword>
<reference key="1">
    <citation type="journal article" date="2006" name="Genome Res.">
        <title>Massive genome erosion and functional adaptations provide insights into the symbiotic lifestyle of Sodalis glossinidius in the tsetse host.</title>
        <authorList>
            <person name="Toh H."/>
            <person name="Weiss B.L."/>
            <person name="Perkin S.A.H."/>
            <person name="Yamashita A."/>
            <person name="Oshima K."/>
            <person name="Hattori M."/>
            <person name="Aksoy S."/>
        </authorList>
    </citation>
    <scope>NUCLEOTIDE SEQUENCE [LARGE SCALE GENOMIC DNA]</scope>
    <source>
        <strain>morsitans</strain>
    </source>
</reference>
<accession>Q2NRL7</accession>
<evidence type="ECO:0000255" key="1">
    <source>
        <dbReference type="HAMAP-Rule" id="MF_00523"/>
    </source>
</evidence>
<dbReference type="EC" id="2.3.1.191" evidence="1"/>
<dbReference type="EMBL" id="AP008232">
    <property type="protein sequence ID" value="BAE75208.1"/>
    <property type="molecule type" value="Genomic_DNA"/>
</dbReference>
<dbReference type="RefSeq" id="WP_011411664.1">
    <property type="nucleotide sequence ID" value="NC_007712.1"/>
</dbReference>
<dbReference type="SMR" id="Q2NRL7"/>
<dbReference type="STRING" id="343509.SG1933"/>
<dbReference type="KEGG" id="sgl:SG1933"/>
<dbReference type="eggNOG" id="COG1044">
    <property type="taxonomic scope" value="Bacteria"/>
</dbReference>
<dbReference type="HOGENOM" id="CLU_049865_0_1_6"/>
<dbReference type="OrthoDB" id="9784739at2"/>
<dbReference type="BioCyc" id="SGLO343509:SGP1_RS17790-MONOMER"/>
<dbReference type="UniPathway" id="UPA00359">
    <property type="reaction ID" value="UER00479"/>
</dbReference>
<dbReference type="Proteomes" id="UP000001932">
    <property type="component" value="Chromosome"/>
</dbReference>
<dbReference type="GO" id="GO:0016020">
    <property type="term" value="C:membrane"/>
    <property type="evidence" value="ECO:0007669"/>
    <property type="project" value="GOC"/>
</dbReference>
<dbReference type="GO" id="GO:0016410">
    <property type="term" value="F:N-acyltransferase activity"/>
    <property type="evidence" value="ECO:0007669"/>
    <property type="project" value="InterPro"/>
</dbReference>
<dbReference type="GO" id="GO:0103118">
    <property type="term" value="F:UDP-3-O-(R-3-hydroxymyristoyl)-glucosamine N-acyltransferase activity"/>
    <property type="evidence" value="ECO:0007669"/>
    <property type="project" value="UniProtKB-EC"/>
</dbReference>
<dbReference type="GO" id="GO:0009245">
    <property type="term" value="P:lipid A biosynthetic process"/>
    <property type="evidence" value="ECO:0007669"/>
    <property type="project" value="UniProtKB-UniRule"/>
</dbReference>
<dbReference type="CDD" id="cd03352">
    <property type="entry name" value="LbH_LpxD"/>
    <property type="match status" value="1"/>
</dbReference>
<dbReference type="FunFam" id="2.160.10.10:FF:000005">
    <property type="entry name" value="UDP-3-O-(3-hydroxymyristoyl)glucosamine N-acyltransferase"/>
    <property type="match status" value="1"/>
</dbReference>
<dbReference type="Gene3D" id="1.20.5.170">
    <property type="match status" value="1"/>
</dbReference>
<dbReference type="Gene3D" id="2.160.10.10">
    <property type="entry name" value="Hexapeptide repeat proteins"/>
    <property type="match status" value="1"/>
</dbReference>
<dbReference type="Gene3D" id="3.40.1390.10">
    <property type="entry name" value="MurE/MurF, N-terminal domain"/>
    <property type="match status" value="1"/>
</dbReference>
<dbReference type="HAMAP" id="MF_00523">
    <property type="entry name" value="LpxD"/>
    <property type="match status" value="1"/>
</dbReference>
<dbReference type="InterPro" id="IPR001451">
    <property type="entry name" value="Hexapep"/>
</dbReference>
<dbReference type="InterPro" id="IPR018357">
    <property type="entry name" value="Hexapep_transf_CS"/>
</dbReference>
<dbReference type="InterPro" id="IPR007691">
    <property type="entry name" value="LpxD"/>
</dbReference>
<dbReference type="InterPro" id="IPR011004">
    <property type="entry name" value="Trimer_LpxA-like_sf"/>
</dbReference>
<dbReference type="InterPro" id="IPR020573">
    <property type="entry name" value="UDP_GlcNAc_AcTrfase_non-rep"/>
</dbReference>
<dbReference type="NCBIfam" id="TIGR01853">
    <property type="entry name" value="lipid_A_lpxD"/>
    <property type="match status" value="1"/>
</dbReference>
<dbReference type="NCBIfam" id="NF002060">
    <property type="entry name" value="PRK00892.1"/>
    <property type="match status" value="1"/>
</dbReference>
<dbReference type="PANTHER" id="PTHR43378">
    <property type="entry name" value="UDP-3-O-ACYLGLUCOSAMINE N-ACYLTRANSFERASE"/>
    <property type="match status" value="1"/>
</dbReference>
<dbReference type="PANTHER" id="PTHR43378:SF2">
    <property type="entry name" value="UDP-3-O-ACYLGLUCOSAMINE N-ACYLTRANSFERASE 1, MITOCHONDRIAL-RELATED"/>
    <property type="match status" value="1"/>
</dbReference>
<dbReference type="Pfam" id="PF00132">
    <property type="entry name" value="Hexapep"/>
    <property type="match status" value="3"/>
</dbReference>
<dbReference type="Pfam" id="PF04613">
    <property type="entry name" value="LpxD"/>
    <property type="match status" value="1"/>
</dbReference>
<dbReference type="SUPFAM" id="SSF51161">
    <property type="entry name" value="Trimeric LpxA-like enzymes"/>
    <property type="match status" value="1"/>
</dbReference>
<dbReference type="PROSITE" id="PS00101">
    <property type="entry name" value="HEXAPEP_TRANSFERASES"/>
    <property type="match status" value="4"/>
</dbReference>
<name>LPXD_SODGM</name>
<organism>
    <name type="scientific">Sodalis glossinidius (strain morsitans)</name>
    <dbReference type="NCBI Taxonomy" id="343509"/>
    <lineage>
        <taxon>Bacteria</taxon>
        <taxon>Pseudomonadati</taxon>
        <taxon>Pseudomonadota</taxon>
        <taxon>Gammaproteobacteria</taxon>
        <taxon>Enterobacterales</taxon>
        <taxon>Bruguierivoracaceae</taxon>
        <taxon>Sodalis</taxon>
    </lineage>
</organism>
<proteinExistence type="inferred from homology"/>
<comment type="function">
    <text evidence="1">Catalyzes the N-acylation of UDP-3-O-(hydroxytetradecanoyl)glucosamine using 3-hydroxytetradecanoyl-ACP as the acyl donor. Is involved in the biosynthesis of lipid A, a phosphorylated glycolipid that anchors the lipopolysaccharide to the outer membrane of the cell.</text>
</comment>
<comment type="catalytic activity">
    <reaction evidence="1">
        <text>a UDP-3-O-[(3R)-3-hydroxyacyl]-alpha-D-glucosamine + a (3R)-hydroxyacyl-[ACP] = a UDP-2-N,3-O-bis[(3R)-3-hydroxyacyl]-alpha-D-glucosamine + holo-[ACP] + H(+)</text>
        <dbReference type="Rhea" id="RHEA:53836"/>
        <dbReference type="Rhea" id="RHEA-COMP:9685"/>
        <dbReference type="Rhea" id="RHEA-COMP:9945"/>
        <dbReference type="ChEBI" id="CHEBI:15378"/>
        <dbReference type="ChEBI" id="CHEBI:64479"/>
        <dbReference type="ChEBI" id="CHEBI:78827"/>
        <dbReference type="ChEBI" id="CHEBI:137740"/>
        <dbReference type="ChEBI" id="CHEBI:137748"/>
        <dbReference type="EC" id="2.3.1.191"/>
    </reaction>
</comment>
<comment type="catalytic activity">
    <reaction evidence="1">
        <text>UDP-3-O-[(3R)-3-hydroxytetradecanoyl]-alpha-D-glucosamine + (3R)-hydroxytetradecanoyl-[ACP] = UDP-2-N,3-O-bis[(3R)-3-hydroxytetradecanoyl]-alpha-D-glucosamine + holo-[ACP] + H(+)</text>
        <dbReference type="Rhea" id="RHEA:17817"/>
        <dbReference type="Rhea" id="RHEA-COMP:9646"/>
        <dbReference type="Rhea" id="RHEA-COMP:9685"/>
        <dbReference type="ChEBI" id="CHEBI:15378"/>
        <dbReference type="ChEBI" id="CHEBI:64479"/>
        <dbReference type="ChEBI" id="CHEBI:71573"/>
        <dbReference type="ChEBI" id="CHEBI:78474"/>
        <dbReference type="ChEBI" id="CHEBI:78847"/>
    </reaction>
</comment>
<comment type="pathway">
    <text evidence="1">Glycolipid biosynthesis; lipid IV(A) biosynthesis; lipid IV(A) from (3R)-3-hydroxytetradecanoyl-[acyl-carrier-protein] and UDP-N-acetyl-alpha-D-glucosamine: step 3/6.</text>
</comment>
<comment type="subunit">
    <text evidence="1">Homotrimer.</text>
</comment>
<comment type="similarity">
    <text evidence="1">Belongs to the transferase hexapeptide repeat family. LpxD subfamily.</text>
</comment>
<sequence>MSSIRLADLAQQLDAQLHGDGDIVITGIASMGSAQAGQITFLSDSRFREKLSSCQASAVVLTADSLPFFTGAALVVRNPYLTYARMAQLMDITPKPAEDIGAGAVIAPDATLGQRVAVGANAVIESGVVLGDDVIIGPGCFVGKNTRIGAGTRLWANVTVYHDISIGERCLIQSGTVIGADGFGYANDRGNWIKIPQLGRVIIGDRVEIGACTTIDRGALDDTRIGNGVIIDNQCQIAHNVVIGDNTAVAGGVIMAGSLTIGRYCMIGGASVINGHMAICDKVTVTGMGMVMRPITEPGVYSSGIPLQPNKEWRKTAALVMNISDMSKRMKAIERKLAKN</sequence>